<accession>A9IVY9</accession>
<comment type="function">
    <text evidence="1">Can catalyze the hydrolysis of ATP in the presence of single-stranded DNA, the ATP-dependent uptake of single-stranded DNA by duplex DNA, and the ATP-dependent hybridization of homologous single-stranded DNAs. It interacts with LexA causing its activation and leading to its autocatalytic cleavage.</text>
</comment>
<comment type="subcellular location">
    <subcellularLocation>
        <location evidence="1">Cytoplasm</location>
    </subcellularLocation>
</comment>
<comment type="similarity">
    <text evidence="1">Belongs to the RecA family.</text>
</comment>
<name>RECA_BART1</name>
<reference key="1">
    <citation type="journal article" date="2007" name="Nat. Genet.">
        <title>Genomic analysis of Bartonella identifies type IV secretion systems as host adaptability factors.</title>
        <authorList>
            <person name="Saenz H.L."/>
            <person name="Engel P."/>
            <person name="Stoeckli M.C."/>
            <person name="Lanz C."/>
            <person name="Raddatz G."/>
            <person name="Vayssier-Taussat M."/>
            <person name="Birtles R."/>
            <person name="Schuster S.C."/>
            <person name="Dehio C."/>
        </authorList>
    </citation>
    <scope>NUCLEOTIDE SEQUENCE [LARGE SCALE GENOMIC DNA]</scope>
    <source>
        <strain>CIP 105476 / IBS 506</strain>
    </source>
</reference>
<organism>
    <name type="scientific">Bartonella tribocorum (strain CIP 105476 / IBS 506)</name>
    <dbReference type="NCBI Taxonomy" id="382640"/>
    <lineage>
        <taxon>Bacteria</taxon>
        <taxon>Pseudomonadati</taxon>
        <taxon>Pseudomonadota</taxon>
        <taxon>Alphaproteobacteria</taxon>
        <taxon>Hyphomicrobiales</taxon>
        <taxon>Bartonellaceae</taxon>
        <taxon>Bartonella</taxon>
    </lineage>
</organism>
<feature type="chain" id="PRO_1000078662" description="Protein RecA">
    <location>
        <begin position="1"/>
        <end position="347"/>
    </location>
</feature>
<feature type="binding site" evidence="1">
    <location>
        <begin position="64"/>
        <end position="71"/>
    </location>
    <ligand>
        <name>ATP</name>
        <dbReference type="ChEBI" id="CHEBI:30616"/>
    </ligand>
</feature>
<gene>
    <name evidence="1" type="primary">recA</name>
    <name type="ordered locus">BT_1490</name>
</gene>
<proteinExistence type="inferred from homology"/>
<protein>
    <recommendedName>
        <fullName evidence="1">Protein RecA</fullName>
    </recommendedName>
    <alternativeName>
        <fullName evidence="1">Recombinase A</fullName>
    </alternativeName>
</protein>
<keyword id="KW-0067">ATP-binding</keyword>
<keyword id="KW-0963">Cytoplasm</keyword>
<keyword id="KW-0227">DNA damage</keyword>
<keyword id="KW-0233">DNA recombination</keyword>
<keyword id="KW-0234">DNA repair</keyword>
<keyword id="KW-0238">DNA-binding</keyword>
<keyword id="KW-0547">Nucleotide-binding</keyword>
<keyword id="KW-0742">SOS response</keyword>
<sequence length="347" mass="37410">MDKTKALDAALSQIERSFGKGSIMRLGQKEQVVEIETVPTGSLSLDIALGIGGLPKGRIVEIYGPESSGKTTLALHAIAEAQKGGGICAFIDAEHALDPIYARKLGVDLENLFISQPDTGEQALEITETLVRSGAVDVLVVDSVAALTPRAEIDGEMGDALPGLQARLMSKALRKLTASIFRSNCMVIFINQIRMKIGVMFGSPETTTGGNALKFYASVRLDIRRIGSIKDRDMIVGNQTRVKVVKNKLAPPFKQVEFDIIYGEGISKLGELIDLGVKVGIVEKSGSWFSYNSQRLGQGRENAKQFLREHAEIAAEIETALRQNAGLIAIELLENAGSENTEGDEVI</sequence>
<dbReference type="EMBL" id="AM260525">
    <property type="protein sequence ID" value="CAK01836.1"/>
    <property type="molecule type" value="Genomic_DNA"/>
</dbReference>
<dbReference type="RefSeq" id="WP_012231976.1">
    <property type="nucleotide sequence ID" value="NC_010161.1"/>
</dbReference>
<dbReference type="SMR" id="A9IVY9"/>
<dbReference type="KEGG" id="btr:BT_1490"/>
<dbReference type="eggNOG" id="COG0468">
    <property type="taxonomic scope" value="Bacteria"/>
</dbReference>
<dbReference type="HOGENOM" id="CLU_040469_1_2_5"/>
<dbReference type="Proteomes" id="UP000001592">
    <property type="component" value="Chromosome"/>
</dbReference>
<dbReference type="GO" id="GO:0005829">
    <property type="term" value="C:cytosol"/>
    <property type="evidence" value="ECO:0007669"/>
    <property type="project" value="TreeGrafter"/>
</dbReference>
<dbReference type="GO" id="GO:0005524">
    <property type="term" value="F:ATP binding"/>
    <property type="evidence" value="ECO:0007669"/>
    <property type="project" value="UniProtKB-UniRule"/>
</dbReference>
<dbReference type="GO" id="GO:0016887">
    <property type="term" value="F:ATP hydrolysis activity"/>
    <property type="evidence" value="ECO:0007669"/>
    <property type="project" value="InterPro"/>
</dbReference>
<dbReference type="GO" id="GO:0140664">
    <property type="term" value="F:ATP-dependent DNA damage sensor activity"/>
    <property type="evidence" value="ECO:0007669"/>
    <property type="project" value="InterPro"/>
</dbReference>
<dbReference type="GO" id="GO:0003684">
    <property type="term" value="F:damaged DNA binding"/>
    <property type="evidence" value="ECO:0007669"/>
    <property type="project" value="UniProtKB-UniRule"/>
</dbReference>
<dbReference type="GO" id="GO:0003697">
    <property type="term" value="F:single-stranded DNA binding"/>
    <property type="evidence" value="ECO:0007669"/>
    <property type="project" value="UniProtKB-UniRule"/>
</dbReference>
<dbReference type="GO" id="GO:0006310">
    <property type="term" value="P:DNA recombination"/>
    <property type="evidence" value="ECO:0007669"/>
    <property type="project" value="UniProtKB-UniRule"/>
</dbReference>
<dbReference type="GO" id="GO:0006281">
    <property type="term" value="P:DNA repair"/>
    <property type="evidence" value="ECO:0007669"/>
    <property type="project" value="UniProtKB-UniRule"/>
</dbReference>
<dbReference type="GO" id="GO:0009432">
    <property type="term" value="P:SOS response"/>
    <property type="evidence" value="ECO:0007669"/>
    <property type="project" value="UniProtKB-UniRule"/>
</dbReference>
<dbReference type="CDD" id="cd00983">
    <property type="entry name" value="RecA"/>
    <property type="match status" value="1"/>
</dbReference>
<dbReference type="FunFam" id="3.40.50.300:FF:000087">
    <property type="entry name" value="Recombinase RecA"/>
    <property type="match status" value="1"/>
</dbReference>
<dbReference type="Gene3D" id="3.40.50.300">
    <property type="entry name" value="P-loop containing nucleotide triphosphate hydrolases"/>
    <property type="match status" value="1"/>
</dbReference>
<dbReference type="HAMAP" id="MF_00268">
    <property type="entry name" value="RecA"/>
    <property type="match status" value="1"/>
</dbReference>
<dbReference type="InterPro" id="IPR003593">
    <property type="entry name" value="AAA+_ATPase"/>
</dbReference>
<dbReference type="InterPro" id="IPR013765">
    <property type="entry name" value="DNA_recomb/repair_RecA"/>
</dbReference>
<dbReference type="InterPro" id="IPR020584">
    <property type="entry name" value="DNA_recomb/repair_RecA_CS"/>
</dbReference>
<dbReference type="InterPro" id="IPR027417">
    <property type="entry name" value="P-loop_NTPase"/>
</dbReference>
<dbReference type="InterPro" id="IPR049261">
    <property type="entry name" value="RecA-like_C"/>
</dbReference>
<dbReference type="InterPro" id="IPR049428">
    <property type="entry name" value="RecA-like_N"/>
</dbReference>
<dbReference type="InterPro" id="IPR020588">
    <property type="entry name" value="RecA_ATP-bd"/>
</dbReference>
<dbReference type="InterPro" id="IPR023400">
    <property type="entry name" value="RecA_C_sf"/>
</dbReference>
<dbReference type="InterPro" id="IPR020587">
    <property type="entry name" value="RecA_monomer-monomer_interface"/>
</dbReference>
<dbReference type="NCBIfam" id="TIGR02012">
    <property type="entry name" value="tigrfam_recA"/>
    <property type="match status" value="1"/>
</dbReference>
<dbReference type="PANTHER" id="PTHR45900:SF1">
    <property type="entry name" value="MITOCHONDRIAL DNA REPAIR PROTEIN RECA HOMOLOG-RELATED"/>
    <property type="match status" value="1"/>
</dbReference>
<dbReference type="PANTHER" id="PTHR45900">
    <property type="entry name" value="RECA"/>
    <property type="match status" value="1"/>
</dbReference>
<dbReference type="Pfam" id="PF00154">
    <property type="entry name" value="RecA"/>
    <property type="match status" value="1"/>
</dbReference>
<dbReference type="Pfam" id="PF21096">
    <property type="entry name" value="RecA_C"/>
    <property type="match status" value="1"/>
</dbReference>
<dbReference type="PRINTS" id="PR00142">
    <property type="entry name" value="RECA"/>
</dbReference>
<dbReference type="SMART" id="SM00382">
    <property type="entry name" value="AAA"/>
    <property type="match status" value="1"/>
</dbReference>
<dbReference type="SUPFAM" id="SSF52540">
    <property type="entry name" value="P-loop containing nucleoside triphosphate hydrolases"/>
    <property type="match status" value="1"/>
</dbReference>
<dbReference type="SUPFAM" id="SSF54752">
    <property type="entry name" value="RecA protein, C-terminal domain"/>
    <property type="match status" value="1"/>
</dbReference>
<dbReference type="PROSITE" id="PS00321">
    <property type="entry name" value="RECA_1"/>
    <property type="match status" value="1"/>
</dbReference>
<dbReference type="PROSITE" id="PS50162">
    <property type="entry name" value="RECA_2"/>
    <property type="match status" value="1"/>
</dbReference>
<dbReference type="PROSITE" id="PS50163">
    <property type="entry name" value="RECA_3"/>
    <property type="match status" value="1"/>
</dbReference>
<evidence type="ECO:0000255" key="1">
    <source>
        <dbReference type="HAMAP-Rule" id="MF_00268"/>
    </source>
</evidence>